<keyword id="KW-0653">Protein transport</keyword>
<keyword id="KW-1185">Reference proteome</keyword>
<keyword id="KW-0813">Transport</keyword>
<feature type="chain" id="PRO_0000417047" description="AP-5 complex subunit beta-1">
    <location>
        <begin position="1"/>
        <end position="876"/>
    </location>
</feature>
<comment type="function">
    <text evidence="1">As part of AP-5, a probable fifth adaptor protein complex, it may be involved in endosomal transport.</text>
</comment>
<comment type="subunit">
    <text evidence="1">Probably part of the adaptor protein complex 5 (AP-5), a tetramer composed of AP5B1, AP5M1, AP5S1 and AP5Z1. Interacts with ZFYVE26 and SPG11 (By similarity).</text>
</comment>
<reference key="1">
    <citation type="journal article" date="2004" name="Nature">
        <title>Genome sequence of the Brown Norway rat yields insights into mammalian evolution.</title>
        <authorList>
            <person name="Gibbs R.A."/>
            <person name="Weinstock G.M."/>
            <person name="Metzker M.L."/>
            <person name="Muzny D.M."/>
            <person name="Sodergren E.J."/>
            <person name="Scherer S."/>
            <person name="Scott G."/>
            <person name="Steffen D."/>
            <person name="Worley K.C."/>
            <person name="Burch P.E."/>
            <person name="Okwuonu G."/>
            <person name="Hines S."/>
            <person name="Lewis L."/>
            <person name="Deramo C."/>
            <person name="Delgado O."/>
            <person name="Dugan-Rocha S."/>
            <person name="Miner G."/>
            <person name="Morgan M."/>
            <person name="Hawes A."/>
            <person name="Gill R."/>
            <person name="Holt R.A."/>
            <person name="Adams M.D."/>
            <person name="Amanatides P.G."/>
            <person name="Baden-Tillson H."/>
            <person name="Barnstead M."/>
            <person name="Chin S."/>
            <person name="Evans C.A."/>
            <person name="Ferriera S."/>
            <person name="Fosler C."/>
            <person name="Glodek A."/>
            <person name="Gu Z."/>
            <person name="Jennings D."/>
            <person name="Kraft C.L."/>
            <person name="Nguyen T."/>
            <person name="Pfannkoch C.M."/>
            <person name="Sitter C."/>
            <person name="Sutton G.G."/>
            <person name="Venter J.C."/>
            <person name="Woodage T."/>
            <person name="Smith D."/>
            <person name="Lee H.-M."/>
            <person name="Gustafson E."/>
            <person name="Cahill P."/>
            <person name="Kana A."/>
            <person name="Doucette-Stamm L."/>
            <person name="Weinstock K."/>
            <person name="Fechtel K."/>
            <person name="Weiss R.B."/>
            <person name="Dunn D.M."/>
            <person name="Green E.D."/>
            <person name="Blakesley R.W."/>
            <person name="Bouffard G.G."/>
            <person name="De Jong P.J."/>
            <person name="Osoegawa K."/>
            <person name="Zhu B."/>
            <person name="Marra M."/>
            <person name="Schein J."/>
            <person name="Bosdet I."/>
            <person name="Fjell C."/>
            <person name="Jones S."/>
            <person name="Krzywinski M."/>
            <person name="Mathewson C."/>
            <person name="Siddiqui A."/>
            <person name="Wye N."/>
            <person name="McPherson J."/>
            <person name="Zhao S."/>
            <person name="Fraser C.M."/>
            <person name="Shetty J."/>
            <person name="Shatsman S."/>
            <person name="Geer K."/>
            <person name="Chen Y."/>
            <person name="Abramzon S."/>
            <person name="Nierman W.C."/>
            <person name="Havlak P.H."/>
            <person name="Chen R."/>
            <person name="Durbin K.J."/>
            <person name="Egan A."/>
            <person name="Ren Y."/>
            <person name="Song X.-Z."/>
            <person name="Li B."/>
            <person name="Liu Y."/>
            <person name="Qin X."/>
            <person name="Cawley S."/>
            <person name="Cooney A.J."/>
            <person name="D'Souza L.M."/>
            <person name="Martin K."/>
            <person name="Wu J.Q."/>
            <person name="Gonzalez-Garay M.L."/>
            <person name="Jackson A.R."/>
            <person name="Kalafus K.J."/>
            <person name="McLeod M.P."/>
            <person name="Milosavljevic A."/>
            <person name="Virk D."/>
            <person name="Volkov A."/>
            <person name="Wheeler D.A."/>
            <person name="Zhang Z."/>
            <person name="Bailey J.A."/>
            <person name="Eichler E.E."/>
            <person name="Tuzun E."/>
            <person name="Birney E."/>
            <person name="Mongin E."/>
            <person name="Ureta-Vidal A."/>
            <person name="Woodwark C."/>
            <person name="Zdobnov E."/>
            <person name="Bork P."/>
            <person name="Suyama M."/>
            <person name="Torrents D."/>
            <person name="Alexandersson M."/>
            <person name="Trask B.J."/>
            <person name="Young J.M."/>
            <person name="Huang H."/>
            <person name="Wang H."/>
            <person name="Xing H."/>
            <person name="Daniels S."/>
            <person name="Gietzen D."/>
            <person name="Schmidt J."/>
            <person name="Stevens K."/>
            <person name="Vitt U."/>
            <person name="Wingrove J."/>
            <person name="Camara F."/>
            <person name="Mar Alba M."/>
            <person name="Abril J.F."/>
            <person name="Guigo R."/>
            <person name="Smit A."/>
            <person name="Dubchak I."/>
            <person name="Rubin E.M."/>
            <person name="Couronne O."/>
            <person name="Poliakov A."/>
            <person name="Huebner N."/>
            <person name="Ganten D."/>
            <person name="Goesele C."/>
            <person name="Hummel O."/>
            <person name="Kreitler T."/>
            <person name="Lee Y.-A."/>
            <person name="Monti J."/>
            <person name="Schulz H."/>
            <person name="Zimdahl H."/>
            <person name="Himmelbauer H."/>
            <person name="Lehrach H."/>
            <person name="Jacob H.J."/>
            <person name="Bromberg S."/>
            <person name="Gullings-Handley J."/>
            <person name="Jensen-Seaman M.I."/>
            <person name="Kwitek A.E."/>
            <person name="Lazar J."/>
            <person name="Pasko D."/>
            <person name="Tonellato P.J."/>
            <person name="Twigger S."/>
            <person name="Ponting C.P."/>
            <person name="Duarte J.M."/>
            <person name="Rice S."/>
            <person name="Goodstadt L."/>
            <person name="Beatson S.A."/>
            <person name="Emes R.D."/>
            <person name="Winter E.E."/>
            <person name="Webber C."/>
            <person name="Brandt P."/>
            <person name="Nyakatura G."/>
            <person name="Adetobi M."/>
            <person name="Chiaromonte F."/>
            <person name="Elnitski L."/>
            <person name="Eswara P."/>
            <person name="Hardison R.C."/>
            <person name="Hou M."/>
            <person name="Kolbe D."/>
            <person name="Makova K."/>
            <person name="Miller W."/>
            <person name="Nekrutenko A."/>
            <person name="Riemer C."/>
            <person name="Schwartz S."/>
            <person name="Taylor J."/>
            <person name="Yang S."/>
            <person name="Zhang Y."/>
            <person name="Lindpaintner K."/>
            <person name="Andrews T.D."/>
            <person name="Caccamo M."/>
            <person name="Clamp M."/>
            <person name="Clarke L."/>
            <person name="Curwen V."/>
            <person name="Durbin R.M."/>
            <person name="Eyras E."/>
            <person name="Searle S.M."/>
            <person name="Cooper G.M."/>
            <person name="Batzoglou S."/>
            <person name="Brudno M."/>
            <person name="Sidow A."/>
            <person name="Stone E.A."/>
            <person name="Payseur B.A."/>
            <person name="Bourque G."/>
            <person name="Lopez-Otin C."/>
            <person name="Puente X.S."/>
            <person name="Chakrabarti K."/>
            <person name="Chatterji S."/>
            <person name="Dewey C."/>
            <person name="Pachter L."/>
            <person name="Bray N."/>
            <person name="Yap V.B."/>
            <person name="Caspi A."/>
            <person name="Tesler G."/>
            <person name="Pevzner P.A."/>
            <person name="Haussler D."/>
            <person name="Roskin K.M."/>
            <person name="Baertsch R."/>
            <person name="Clawson H."/>
            <person name="Furey T.S."/>
            <person name="Hinrichs A.S."/>
            <person name="Karolchik D."/>
            <person name="Kent W.J."/>
            <person name="Rosenbloom K.R."/>
            <person name="Trumbower H."/>
            <person name="Weirauch M."/>
            <person name="Cooper D.N."/>
            <person name="Stenson P.D."/>
            <person name="Ma B."/>
            <person name="Brent M."/>
            <person name="Arumugam M."/>
            <person name="Shteynberg D."/>
            <person name="Copley R.R."/>
            <person name="Taylor M.S."/>
            <person name="Riethman H."/>
            <person name="Mudunuri U."/>
            <person name="Peterson J."/>
            <person name="Guyer M."/>
            <person name="Felsenfeld A."/>
            <person name="Old S."/>
            <person name="Mockrin S."/>
            <person name="Collins F.S."/>
        </authorList>
    </citation>
    <scope>NUCLEOTIDE SEQUENCE [LARGE SCALE GENOMIC DNA]</scope>
    <source>
        <strain>Brown Norway</strain>
    </source>
</reference>
<protein>
    <recommendedName>
        <fullName>AP-5 complex subunit beta-1</fullName>
    </recommendedName>
    <alternativeName>
        <fullName>Adaptor-related protein complex 5 beta subunit</fullName>
        <shortName>Beta5</shortName>
    </alternativeName>
</protein>
<dbReference type="EMBL" id="AABR03000692">
    <property type="status" value="NOT_ANNOTATED_CDS"/>
    <property type="molecule type" value="Genomic_DNA"/>
</dbReference>
<dbReference type="RefSeq" id="NP_001257961.1">
    <property type="nucleotide sequence ID" value="NM_001271032.1"/>
</dbReference>
<dbReference type="FunCoup" id="D3ZVB0">
    <property type="interactions" value="320"/>
</dbReference>
<dbReference type="STRING" id="10116.ENSRNOP00000032524"/>
<dbReference type="GlyGen" id="D3ZVB0">
    <property type="glycosylation" value="1 site"/>
</dbReference>
<dbReference type="PhosphoSitePlus" id="D3ZVB0"/>
<dbReference type="jPOST" id="D3ZVB0"/>
<dbReference type="PaxDb" id="10116-ENSRNOP00000032524"/>
<dbReference type="PeptideAtlas" id="D3ZVB0"/>
<dbReference type="Ensembl" id="ENSRNOT00000036185.5">
    <property type="protein sequence ID" value="ENSRNOP00000032524.3"/>
    <property type="gene ID" value="ENSRNOG00000026114.5"/>
</dbReference>
<dbReference type="GeneID" id="361709"/>
<dbReference type="KEGG" id="rno:361709"/>
<dbReference type="UCSC" id="RGD:1562657">
    <property type="organism name" value="rat"/>
</dbReference>
<dbReference type="AGR" id="RGD:1562657"/>
<dbReference type="CTD" id="91056"/>
<dbReference type="RGD" id="1562657">
    <property type="gene designation" value="Ap5b1"/>
</dbReference>
<dbReference type="eggNOG" id="ENOG502QVTX">
    <property type="taxonomic scope" value="Eukaryota"/>
</dbReference>
<dbReference type="GeneTree" id="ENSGT00530000064721"/>
<dbReference type="HOGENOM" id="CLU_014176_0_0_1"/>
<dbReference type="InParanoid" id="D3ZVB0"/>
<dbReference type="OMA" id="SHHLEPF"/>
<dbReference type="OrthoDB" id="86235at9989"/>
<dbReference type="PhylomeDB" id="D3ZVB0"/>
<dbReference type="TreeFam" id="TF332158"/>
<dbReference type="PRO" id="PR:D3ZVB0"/>
<dbReference type="Proteomes" id="UP000002494">
    <property type="component" value="Chromosome 1"/>
</dbReference>
<dbReference type="Bgee" id="ENSRNOG00000026114">
    <property type="expression patterns" value="Expressed in jejunum and 18 other cell types or tissues"/>
</dbReference>
<dbReference type="GO" id="GO:0030119">
    <property type="term" value="C:AP-type membrane coat adaptor complex"/>
    <property type="evidence" value="ECO:0000250"/>
    <property type="project" value="UniProtKB"/>
</dbReference>
<dbReference type="GO" id="GO:0016197">
    <property type="term" value="P:endosomal transport"/>
    <property type="evidence" value="ECO:0000250"/>
    <property type="project" value="UniProtKB"/>
</dbReference>
<dbReference type="GO" id="GO:0015031">
    <property type="term" value="P:protein transport"/>
    <property type="evidence" value="ECO:0007669"/>
    <property type="project" value="UniProtKB-KW"/>
</dbReference>
<dbReference type="InterPro" id="IPR038741">
    <property type="entry name" value="AP5B1"/>
</dbReference>
<dbReference type="InterPro" id="IPR048980">
    <property type="entry name" value="AP5B1_barrel"/>
</dbReference>
<dbReference type="InterPro" id="IPR048981">
    <property type="entry name" value="AP5B1_C"/>
</dbReference>
<dbReference type="InterPro" id="IPR048979">
    <property type="entry name" value="AP5B1_middle"/>
</dbReference>
<dbReference type="InterPro" id="IPR048978">
    <property type="entry name" value="AP5B1_N"/>
</dbReference>
<dbReference type="PANTHER" id="PTHR34033">
    <property type="entry name" value="AP-5 COMPLEX SUBUNIT BETA-1"/>
    <property type="match status" value="1"/>
</dbReference>
<dbReference type="PANTHER" id="PTHR34033:SF1">
    <property type="entry name" value="AP-5 COMPLEX SUBUNIT BETA-1"/>
    <property type="match status" value="1"/>
</dbReference>
<dbReference type="Pfam" id="PF21589">
    <property type="entry name" value="AP5B1_barrel"/>
    <property type="match status" value="1"/>
</dbReference>
<dbReference type="Pfam" id="PF21590">
    <property type="entry name" value="AP5B1_C"/>
    <property type="match status" value="1"/>
</dbReference>
<dbReference type="Pfam" id="PF21588">
    <property type="entry name" value="AP5B1_middle"/>
    <property type="match status" value="1"/>
</dbReference>
<dbReference type="Pfam" id="PF21587">
    <property type="entry name" value="AP5B1_N"/>
    <property type="match status" value="1"/>
</dbReference>
<proteinExistence type="inferred from homology"/>
<organism>
    <name type="scientific">Rattus norvegicus</name>
    <name type="common">Rat</name>
    <dbReference type="NCBI Taxonomy" id="10116"/>
    <lineage>
        <taxon>Eukaryota</taxon>
        <taxon>Metazoa</taxon>
        <taxon>Chordata</taxon>
        <taxon>Craniata</taxon>
        <taxon>Vertebrata</taxon>
        <taxon>Euteleostomi</taxon>
        <taxon>Mammalia</taxon>
        <taxon>Eutheria</taxon>
        <taxon>Euarchontoglires</taxon>
        <taxon>Glires</taxon>
        <taxon>Rodentia</taxon>
        <taxon>Myomorpha</taxon>
        <taxon>Muroidea</taxon>
        <taxon>Muridae</taxon>
        <taxon>Murinae</taxon>
        <taxon>Rattus</taxon>
    </lineage>
</organism>
<gene>
    <name type="primary">Ap5b1</name>
</gene>
<sequence length="876" mass="94764">MGPLSREAWAQRLGSFRASPSAFLAGAEGEDLGHDLLSDLRSEKLSELIKVSLLTLSLEYSDKLWPDALAAEAAATSLLDTLVLLPSKPSALRRLLLLAATTALVSGGALGPTSEASSRLLPLLLGLASGQDMGRSFGTTSEQRHLQATACECLGELERCKPGLLAGALGVLRSLLGQKGPIQPVSLLLALVLHNTLVVQSRFGAGLQGLLVAKDSSPGSCPWDWTLAEEWDDHLKPQAHGWPTAGEEERDFPILDPNPEDTRELKAAVAQLLDTSYLLTPVAQAQLVWLLGWALQGLRGQPPVLFKPQLVRLLGTAQLTLLHSVLSLKAAFGEALFTAQDEALLLRRLTLVAQHPALPSPTHLFYLHCILSFPENCPLGPEGEEAAPLLLGPQLRRGLMPSLLHDPMVLLARLHLLCLLCADDEEEEKGQLQGPQWFLQELLAGLQQRAAVDGGPRALATLCFQASYLVTSCLTRQPTVQTSLVHGLAQLYRARPSLAPHFVDLLDEVSPELREPLRKVLLREVVARPGKNEALRWHLQMLAKVAEGATQSAILGFLQAAAIHCTDWGLHQALLRVCRALLRTGGGEGLADLLQELARQLENADGRDHARLYYVLLSHLSSSKLGMALGPSLAAPALASSLMAENQGFASALMVQETSAPIQLSVGPQKAKGPLPVLHLQVQALDTPVYSLELRFRVEGQLYEPVEAVHIPSVRPGQPAHPLHLPLQPRSPAPARLHVRALYTTPAGLTCHAHLPPLSVNFADLFLPFPQLPKGSELCFFDELWNSCLPKGVESRVWCPLGPQGLEALVSQHLEPFVVVAQPPTTYLIAVRLPPHSMLLLRLEKAQVHGVPVALRTDDWAVLPLVGDYLRGLAAH</sequence>
<accession>D3ZVB0</accession>
<evidence type="ECO:0000250" key="1"/>
<name>AP5B1_RAT</name>